<evidence type="ECO:0000255" key="1">
    <source>
        <dbReference type="HAMAP-Rule" id="MF_01903"/>
    </source>
</evidence>
<protein>
    <recommendedName>
        <fullName evidence="1">Xanthine-guanine phosphoribosyltransferase</fullName>
        <shortName evidence="1">XGPRT</shortName>
        <ecNumber evidence="1">2.4.2.-</ecNumber>
        <ecNumber evidence="1">2.4.2.22</ecNumber>
    </recommendedName>
    <alternativeName>
        <fullName evidence="1">Xanthine phosphoribosyltransferase</fullName>
    </alternativeName>
</protein>
<sequence length="152" mass="16984">MSEKYIVTWDMLQIHARKLASRLMPSEQWKGIIAVSRGGLVPGALLARELGIRHVDTVCISSYDHDNQRELKVLKRAEGDGEGFIVIDDLVDTGGTAVAIREMYPKAHFITIFAKPAGRPLVDDYVVDIPQNTWIEQPWDMGVVFVPPISGR</sequence>
<dbReference type="EC" id="2.4.2.-" evidence="1"/>
<dbReference type="EC" id="2.4.2.22" evidence="1"/>
<dbReference type="EMBL" id="CU928161">
    <property type="protein sequence ID" value="CAR01628.1"/>
    <property type="molecule type" value="Genomic_DNA"/>
</dbReference>
<dbReference type="RefSeq" id="WP_001291988.1">
    <property type="nucleotide sequence ID" value="NC_011742.1"/>
</dbReference>
<dbReference type="SMR" id="B7MC88"/>
<dbReference type="KEGG" id="ecz:ECS88_0273"/>
<dbReference type="HOGENOM" id="CLU_080904_3_0_6"/>
<dbReference type="UniPathway" id="UPA00602">
    <property type="reaction ID" value="UER00658"/>
</dbReference>
<dbReference type="UniPathway" id="UPA00909">
    <property type="reaction ID" value="UER00887"/>
</dbReference>
<dbReference type="Proteomes" id="UP000000747">
    <property type="component" value="Chromosome"/>
</dbReference>
<dbReference type="GO" id="GO:0005829">
    <property type="term" value="C:cytosol"/>
    <property type="evidence" value="ECO:0007669"/>
    <property type="project" value="TreeGrafter"/>
</dbReference>
<dbReference type="GO" id="GO:0005886">
    <property type="term" value="C:plasma membrane"/>
    <property type="evidence" value="ECO:0007669"/>
    <property type="project" value="UniProtKB-SubCell"/>
</dbReference>
<dbReference type="GO" id="GO:0052657">
    <property type="term" value="F:guanine phosphoribosyltransferase activity"/>
    <property type="evidence" value="ECO:0007669"/>
    <property type="project" value="RHEA"/>
</dbReference>
<dbReference type="GO" id="GO:0004422">
    <property type="term" value="F:hypoxanthine phosphoribosyltransferase activity"/>
    <property type="evidence" value="ECO:0007669"/>
    <property type="project" value="TreeGrafter"/>
</dbReference>
<dbReference type="GO" id="GO:0000287">
    <property type="term" value="F:magnesium ion binding"/>
    <property type="evidence" value="ECO:0007669"/>
    <property type="project" value="UniProtKB-UniRule"/>
</dbReference>
<dbReference type="GO" id="GO:0000310">
    <property type="term" value="F:xanthine phosphoribosyltransferase activity"/>
    <property type="evidence" value="ECO:0007669"/>
    <property type="project" value="UniProtKB-UniRule"/>
</dbReference>
<dbReference type="GO" id="GO:0032263">
    <property type="term" value="P:GMP salvage"/>
    <property type="evidence" value="ECO:0007669"/>
    <property type="project" value="UniProtKB-UniRule"/>
</dbReference>
<dbReference type="GO" id="GO:0032264">
    <property type="term" value="P:IMP salvage"/>
    <property type="evidence" value="ECO:0007669"/>
    <property type="project" value="TreeGrafter"/>
</dbReference>
<dbReference type="GO" id="GO:0006166">
    <property type="term" value="P:purine ribonucleoside salvage"/>
    <property type="evidence" value="ECO:0007669"/>
    <property type="project" value="UniProtKB-KW"/>
</dbReference>
<dbReference type="GO" id="GO:0032265">
    <property type="term" value="P:XMP salvage"/>
    <property type="evidence" value="ECO:0007669"/>
    <property type="project" value="UniProtKB-UniRule"/>
</dbReference>
<dbReference type="CDD" id="cd06223">
    <property type="entry name" value="PRTases_typeI"/>
    <property type="match status" value="1"/>
</dbReference>
<dbReference type="FunFam" id="3.40.50.2020:FF:000009">
    <property type="entry name" value="Xanthine phosphoribosyltransferase"/>
    <property type="match status" value="1"/>
</dbReference>
<dbReference type="Gene3D" id="3.40.50.2020">
    <property type="match status" value="1"/>
</dbReference>
<dbReference type="HAMAP" id="MF_01903">
    <property type="entry name" value="XGPRT"/>
    <property type="match status" value="1"/>
</dbReference>
<dbReference type="InterPro" id="IPR000836">
    <property type="entry name" value="PRibTrfase_dom"/>
</dbReference>
<dbReference type="InterPro" id="IPR029057">
    <property type="entry name" value="PRTase-like"/>
</dbReference>
<dbReference type="InterPro" id="IPR023747">
    <property type="entry name" value="Xanthine_Guanine_PRibTrfase"/>
</dbReference>
<dbReference type="NCBIfam" id="NF006613">
    <property type="entry name" value="PRK09177.1"/>
    <property type="match status" value="1"/>
</dbReference>
<dbReference type="PANTHER" id="PTHR39563">
    <property type="entry name" value="XANTHINE PHOSPHORIBOSYLTRANSFERASE"/>
    <property type="match status" value="1"/>
</dbReference>
<dbReference type="PANTHER" id="PTHR39563:SF1">
    <property type="entry name" value="XANTHINE-GUANINE PHOSPHORIBOSYLTRANSFERASE"/>
    <property type="match status" value="1"/>
</dbReference>
<dbReference type="Pfam" id="PF00156">
    <property type="entry name" value="Pribosyltran"/>
    <property type="match status" value="1"/>
</dbReference>
<dbReference type="SUPFAM" id="SSF53271">
    <property type="entry name" value="PRTase-like"/>
    <property type="match status" value="1"/>
</dbReference>
<dbReference type="PROSITE" id="PS00103">
    <property type="entry name" value="PUR_PYR_PR_TRANSFER"/>
    <property type="match status" value="1"/>
</dbReference>
<proteinExistence type="inferred from homology"/>
<feature type="chain" id="PRO_1000188738" description="Xanthine-guanine phosphoribosyltransferase">
    <location>
        <begin position="1"/>
        <end position="152"/>
    </location>
</feature>
<feature type="binding site" evidence="1">
    <location>
        <begin position="37"/>
        <end position="38"/>
    </location>
    <ligand>
        <name>5-phospho-alpha-D-ribose 1-diphosphate</name>
        <dbReference type="ChEBI" id="CHEBI:58017"/>
    </ligand>
</feature>
<feature type="binding site" evidence="1">
    <location>
        <position position="69"/>
    </location>
    <ligand>
        <name>5-phospho-alpha-D-ribose 1-diphosphate</name>
        <dbReference type="ChEBI" id="CHEBI:58017"/>
    </ligand>
</feature>
<feature type="binding site" evidence="1">
    <location>
        <position position="69"/>
    </location>
    <ligand>
        <name>GMP</name>
        <dbReference type="ChEBI" id="CHEBI:58115"/>
    </ligand>
</feature>
<feature type="binding site" evidence="1">
    <location>
        <begin position="88"/>
        <end position="96"/>
    </location>
    <ligand>
        <name>5-phospho-alpha-D-ribose 1-diphosphate</name>
        <dbReference type="ChEBI" id="CHEBI:58017"/>
    </ligand>
</feature>
<feature type="binding site" evidence="1">
    <location>
        <position position="89"/>
    </location>
    <ligand>
        <name>Mg(2+)</name>
        <dbReference type="ChEBI" id="CHEBI:18420"/>
    </ligand>
</feature>
<feature type="binding site" evidence="1">
    <location>
        <begin position="92"/>
        <end position="96"/>
    </location>
    <ligand>
        <name>GMP</name>
        <dbReference type="ChEBI" id="CHEBI:58115"/>
    </ligand>
</feature>
<feature type="binding site" evidence="1">
    <location>
        <position position="92"/>
    </location>
    <ligand>
        <name>guanine</name>
        <dbReference type="ChEBI" id="CHEBI:16235"/>
    </ligand>
</feature>
<feature type="binding site" evidence="1">
    <location>
        <position position="92"/>
    </location>
    <ligand>
        <name>xanthine</name>
        <dbReference type="ChEBI" id="CHEBI:17712"/>
    </ligand>
</feature>
<feature type="binding site" evidence="1">
    <location>
        <begin position="134"/>
        <end position="135"/>
    </location>
    <ligand>
        <name>GMP</name>
        <dbReference type="ChEBI" id="CHEBI:58115"/>
    </ligand>
</feature>
<feature type="binding site" evidence="1">
    <location>
        <position position="135"/>
    </location>
    <ligand>
        <name>guanine</name>
        <dbReference type="ChEBI" id="CHEBI:16235"/>
    </ligand>
</feature>
<feature type="binding site" evidence="1">
    <location>
        <position position="135"/>
    </location>
    <ligand>
        <name>xanthine</name>
        <dbReference type="ChEBI" id="CHEBI:17712"/>
    </ligand>
</feature>
<name>XGPT_ECO45</name>
<keyword id="KW-0997">Cell inner membrane</keyword>
<keyword id="KW-1003">Cell membrane</keyword>
<keyword id="KW-0328">Glycosyltransferase</keyword>
<keyword id="KW-0460">Magnesium</keyword>
<keyword id="KW-0472">Membrane</keyword>
<keyword id="KW-0479">Metal-binding</keyword>
<keyword id="KW-0660">Purine salvage</keyword>
<keyword id="KW-1185">Reference proteome</keyword>
<keyword id="KW-0808">Transferase</keyword>
<accession>B7MC88</accession>
<organism>
    <name type="scientific">Escherichia coli O45:K1 (strain S88 / ExPEC)</name>
    <dbReference type="NCBI Taxonomy" id="585035"/>
    <lineage>
        <taxon>Bacteria</taxon>
        <taxon>Pseudomonadati</taxon>
        <taxon>Pseudomonadota</taxon>
        <taxon>Gammaproteobacteria</taxon>
        <taxon>Enterobacterales</taxon>
        <taxon>Enterobacteriaceae</taxon>
        <taxon>Escherichia</taxon>
    </lineage>
</organism>
<reference key="1">
    <citation type="journal article" date="2009" name="PLoS Genet.">
        <title>Organised genome dynamics in the Escherichia coli species results in highly diverse adaptive paths.</title>
        <authorList>
            <person name="Touchon M."/>
            <person name="Hoede C."/>
            <person name="Tenaillon O."/>
            <person name="Barbe V."/>
            <person name="Baeriswyl S."/>
            <person name="Bidet P."/>
            <person name="Bingen E."/>
            <person name="Bonacorsi S."/>
            <person name="Bouchier C."/>
            <person name="Bouvet O."/>
            <person name="Calteau A."/>
            <person name="Chiapello H."/>
            <person name="Clermont O."/>
            <person name="Cruveiller S."/>
            <person name="Danchin A."/>
            <person name="Diard M."/>
            <person name="Dossat C."/>
            <person name="Karoui M.E."/>
            <person name="Frapy E."/>
            <person name="Garry L."/>
            <person name="Ghigo J.M."/>
            <person name="Gilles A.M."/>
            <person name="Johnson J."/>
            <person name="Le Bouguenec C."/>
            <person name="Lescat M."/>
            <person name="Mangenot S."/>
            <person name="Martinez-Jehanne V."/>
            <person name="Matic I."/>
            <person name="Nassif X."/>
            <person name="Oztas S."/>
            <person name="Petit M.A."/>
            <person name="Pichon C."/>
            <person name="Rouy Z."/>
            <person name="Ruf C.S."/>
            <person name="Schneider D."/>
            <person name="Tourret J."/>
            <person name="Vacherie B."/>
            <person name="Vallenet D."/>
            <person name="Medigue C."/>
            <person name="Rocha E.P.C."/>
            <person name="Denamur E."/>
        </authorList>
    </citation>
    <scope>NUCLEOTIDE SEQUENCE [LARGE SCALE GENOMIC DNA]</scope>
    <source>
        <strain>S88 / ExPEC</strain>
    </source>
</reference>
<comment type="function">
    <text evidence="1">Purine salvage pathway enzyme that catalyzes the transfer of the ribosyl-5-phosphate group from 5-phospho-alpha-D-ribose 1-diphosphate (PRPP) to the N9 position of the 6-oxopurines guanine and xanthine to form the corresponding ribonucleotides GMP (guanosine 5'-monophosphate) and XMP (xanthosine 5'-monophosphate), with the release of PPi. To a lesser extent, also acts on hypoxanthine.</text>
</comment>
<comment type="catalytic activity">
    <reaction evidence="1">
        <text>GMP + diphosphate = guanine + 5-phospho-alpha-D-ribose 1-diphosphate</text>
        <dbReference type="Rhea" id="RHEA:25424"/>
        <dbReference type="ChEBI" id="CHEBI:16235"/>
        <dbReference type="ChEBI" id="CHEBI:33019"/>
        <dbReference type="ChEBI" id="CHEBI:58017"/>
        <dbReference type="ChEBI" id="CHEBI:58115"/>
    </reaction>
    <physiologicalReaction direction="right-to-left" evidence="1">
        <dbReference type="Rhea" id="RHEA:25426"/>
    </physiologicalReaction>
</comment>
<comment type="catalytic activity">
    <reaction evidence="1">
        <text>XMP + diphosphate = xanthine + 5-phospho-alpha-D-ribose 1-diphosphate</text>
        <dbReference type="Rhea" id="RHEA:10800"/>
        <dbReference type="ChEBI" id="CHEBI:17712"/>
        <dbReference type="ChEBI" id="CHEBI:33019"/>
        <dbReference type="ChEBI" id="CHEBI:57464"/>
        <dbReference type="ChEBI" id="CHEBI:58017"/>
        <dbReference type="EC" id="2.4.2.22"/>
    </reaction>
    <physiologicalReaction direction="right-to-left" evidence="1">
        <dbReference type="Rhea" id="RHEA:10802"/>
    </physiologicalReaction>
</comment>
<comment type="catalytic activity">
    <reaction evidence="1">
        <text>IMP + diphosphate = hypoxanthine + 5-phospho-alpha-D-ribose 1-diphosphate</text>
        <dbReference type="Rhea" id="RHEA:17973"/>
        <dbReference type="ChEBI" id="CHEBI:17368"/>
        <dbReference type="ChEBI" id="CHEBI:33019"/>
        <dbReference type="ChEBI" id="CHEBI:58017"/>
        <dbReference type="ChEBI" id="CHEBI:58053"/>
    </reaction>
    <physiologicalReaction direction="right-to-left" evidence="1">
        <dbReference type="Rhea" id="RHEA:17975"/>
    </physiologicalReaction>
</comment>
<comment type="cofactor">
    <cofactor evidence="1">
        <name>Mg(2+)</name>
        <dbReference type="ChEBI" id="CHEBI:18420"/>
    </cofactor>
</comment>
<comment type="pathway">
    <text evidence="1">Purine metabolism; GMP biosynthesis via salvage pathway; GMP from guanine: step 1/1.</text>
</comment>
<comment type="pathway">
    <text evidence="1">Purine metabolism; XMP biosynthesis via salvage pathway; XMP from xanthine: step 1/1.</text>
</comment>
<comment type="subunit">
    <text evidence="1">Homotetramer.</text>
</comment>
<comment type="subcellular location">
    <subcellularLocation>
        <location evidence="1">Cell inner membrane</location>
        <topology evidence="1">Peripheral membrane protein</topology>
    </subcellularLocation>
</comment>
<comment type="similarity">
    <text evidence="1">Belongs to the purine/pyrimidine phosphoribosyltransferase family. XGPT subfamily.</text>
</comment>
<gene>
    <name evidence="1" type="primary">gpt</name>
    <name type="ordered locus">ECS88_0273</name>
</gene>